<gene>
    <name type="ordered locus">CC_0002</name>
</gene>
<dbReference type="EC" id="3.6.1.9" evidence="1"/>
<dbReference type="EMBL" id="AE005673">
    <property type="protein sequence ID" value="AAK21990.1"/>
    <property type="molecule type" value="Genomic_DNA"/>
</dbReference>
<dbReference type="PIR" id="B87249">
    <property type="entry name" value="B87249"/>
</dbReference>
<dbReference type="RefSeq" id="NP_418822.1">
    <property type="nucleotide sequence ID" value="NC_002696.2"/>
</dbReference>
<dbReference type="RefSeq" id="WP_010917893.1">
    <property type="nucleotide sequence ID" value="NC_002696.2"/>
</dbReference>
<dbReference type="SMR" id="Q9AC58"/>
<dbReference type="STRING" id="190650.CC_0002"/>
<dbReference type="EnsemblBacteria" id="AAK21990">
    <property type="protein sequence ID" value="AAK21990"/>
    <property type="gene ID" value="CC_0002"/>
</dbReference>
<dbReference type="KEGG" id="ccr:CC_0002"/>
<dbReference type="PATRIC" id="fig|190650.5.peg.2"/>
<dbReference type="eggNOG" id="COG0424">
    <property type="taxonomic scope" value="Bacteria"/>
</dbReference>
<dbReference type="HOGENOM" id="CLU_040416_1_1_5"/>
<dbReference type="BioCyc" id="CAULO:CC0002-MONOMER"/>
<dbReference type="Proteomes" id="UP000001816">
    <property type="component" value="Chromosome"/>
</dbReference>
<dbReference type="GO" id="GO:0005737">
    <property type="term" value="C:cytoplasm"/>
    <property type="evidence" value="ECO:0007669"/>
    <property type="project" value="UniProtKB-SubCell"/>
</dbReference>
<dbReference type="GO" id="GO:0047429">
    <property type="term" value="F:nucleoside triphosphate diphosphatase activity"/>
    <property type="evidence" value="ECO:0007669"/>
    <property type="project" value="UniProtKB-EC"/>
</dbReference>
<dbReference type="GO" id="GO:0009117">
    <property type="term" value="P:nucleotide metabolic process"/>
    <property type="evidence" value="ECO:0007669"/>
    <property type="project" value="UniProtKB-KW"/>
</dbReference>
<dbReference type="CDD" id="cd00555">
    <property type="entry name" value="Maf"/>
    <property type="match status" value="1"/>
</dbReference>
<dbReference type="Gene3D" id="3.90.950.10">
    <property type="match status" value="1"/>
</dbReference>
<dbReference type="HAMAP" id="MF_00528">
    <property type="entry name" value="Maf"/>
    <property type="match status" value="1"/>
</dbReference>
<dbReference type="InterPro" id="IPR029001">
    <property type="entry name" value="ITPase-like_fam"/>
</dbReference>
<dbReference type="InterPro" id="IPR003697">
    <property type="entry name" value="Maf-like"/>
</dbReference>
<dbReference type="PANTHER" id="PTHR43213">
    <property type="entry name" value="BIFUNCTIONAL DTTP/UTP PYROPHOSPHATASE/METHYLTRANSFERASE PROTEIN-RELATED"/>
    <property type="match status" value="1"/>
</dbReference>
<dbReference type="PANTHER" id="PTHR43213:SF5">
    <property type="entry name" value="BIFUNCTIONAL DTTP_UTP PYROPHOSPHATASE_METHYLTRANSFERASE PROTEIN-RELATED"/>
    <property type="match status" value="1"/>
</dbReference>
<dbReference type="Pfam" id="PF02545">
    <property type="entry name" value="Maf"/>
    <property type="match status" value="1"/>
</dbReference>
<dbReference type="PIRSF" id="PIRSF006305">
    <property type="entry name" value="Maf"/>
    <property type="match status" value="1"/>
</dbReference>
<dbReference type="SUPFAM" id="SSF52972">
    <property type="entry name" value="ITPase-like"/>
    <property type="match status" value="1"/>
</dbReference>
<proteinExistence type="inferred from homology"/>
<feature type="chain" id="PRO_0000123005" description="Nucleoside triphosphate pyrophosphatase">
    <location>
        <begin position="1"/>
        <end position="199"/>
    </location>
</feature>
<feature type="active site" description="Proton acceptor" evidence="1">
    <location>
        <position position="76"/>
    </location>
</feature>
<sequence>MSLTPVTLASQSSARQMILKNAGVAFEAVSPGVDEDAAKAGLLAEDVTPRDIADALAEMKAVKVSTKRPGLVIGADQTLDLKGRLIDKAGSLDEARARLLELRGTTHKLHSAVVVARDGRPIWRIVESAKLSVRPFSDAWLDRYIERRGEALLWSVGCYELESEGVQLFDKIEGDYFTILGLPLVGLLDFLRLHGALTV</sequence>
<protein>
    <recommendedName>
        <fullName evidence="1">Nucleoside triphosphate pyrophosphatase</fullName>
        <ecNumber evidence="1">3.6.1.9</ecNumber>
    </recommendedName>
    <alternativeName>
        <fullName evidence="1">Nucleotide pyrophosphatase</fullName>
        <shortName evidence="1">Nucleotide PPase</shortName>
    </alternativeName>
</protein>
<comment type="function">
    <text evidence="1">Nucleoside triphosphate pyrophosphatase. May have a dual role in cell division arrest and in preventing the incorporation of modified nucleotides into cellular nucleic acids.</text>
</comment>
<comment type="catalytic activity">
    <reaction evidence="1">
        <text>a ribonucleoside 5'-triphosphate + H2O = a ribonucleoside 5'-phosphate + diphosphate + H(+)</text>
        <dbReference type="Rhea" id="RHEA:23996"/>
        <dbReference type="ChEBI" id="CHEBI:15377"/>
        <dbReference type="ChEBI" id="CHEBI:15378"/>
        <dbReference type="ChEBI" id="CHEBI:33019"/>
        <dbReference type="ChEBI" id="CHEBI:58043"/>
        <dbReference type="ChEBI" id="CHEBI:61557"/>
        <dbReference type="EC" id="3.6.1.9"/>
    </reaction>
</comment>
<comment type="catalytic activity">
    <reaction evidence="1">
        <text>a 2'-deoxyribonucleoside 5'-triphosphate + H2O = a 2'-deoxyribonucleoside 5'-phosphate + diphosphate + H(+)</text>
        <dbReference type="Rhea" id="RHEA:44644"/>
        <dbReference type="ChEBI" id="CHEBI:15377"/>
        <dbReference type="ChEBI" id="CHEBI:15378"/>
        <dbReference type="ChEBI" id="CHEBI:33019"/>
        <dbReference type="ChEBI" id="CHEBI:61560"/>
        <dbReference type="ChEBI" id="CHEBI:65317"/>
        <dbReference type="EC" id="3.6.1.9"/>
    </reaction>
</comment>
<comment type="cofactor">
    <cofactor evidence="1">
        <name>a divalent metal cation</name>
        <dbReference type="ChEBI" id="CHEBI:60240"/>
    </cofactor>
</comment>
<comment type="subcellular location">
    <subcellularLocation>
        <location evidence="1">Cytoplasm</location>
    </subcellularLocation>
</comment>
<comment type="similarity">
    <text evidence="1">Belongs to the Maf family.</text>
</comment>
<keyword id="KW-0963">Cytoplasm</keyword>
<keyword id="KW-0378">Hydrolase</keyword>
<keyword id="KW-0546">Nucleotide metabolism</keyword>
<keyword id="KW-1185">Reference proteome</keyword>
<organism>
    <name type="scientific">Caulobacter vibrioides (strain ATCC 19089 / CIP 103742 / CB 15)</name>
    <name type="common">Caulobacter crescentus</name>
    <dbReference type="NCBI Taxonomy" id="190650"/>
    <lineage>
        <taxon>Bacteria</taxon>
        <taxon>Pseudomonadati</taxon>
        <taxon>Pseudomonadota</taxon>
        <taxon>Alphaproteobacteria</taxon>
        <taxon>Caulobacterales</taxon>
        <taxon>Caulobacteraceae</taxon>
        <taxon>Caulobacter</taxon>
    </lineage>
</organism>
<reference key="1">
    <citation type="journal article" date="2001" name="Proc. Natl. Acad. Sci. U.S.A.">
        <title>Complete genome sequence of Caulobacter crescentus.</title>
        <authorList>
            <person name="Nierman W.C."/>
            <person name="Feldblyum T.V."/>
            <person name="Laub M.T."/>
            <person name="Paulsen I.T."/>
            <person name="Nelson K.E."/>
            <person name="Eisen J.A."/>
            <person name="Heidelberg J.F."/>
            <person name="Alley M.R.K."/>
            <person name="Ohta N."/>
            <person name="Maddock J.R."/>
            <person name="Potocka I."/>
            <person name="Nelson W.C."/>
            <person name="Newton A."/>
            <person name="Stephens C."/>
            <person name="Phadke N.D."/>
            <person name="Ely B."/>
            <person name="DeBoy R.T."/>
            <person name="Dodson R.J."/>
            <person name="Durkin A.S."/>
            <person name="Gwinn M.L."/>
            <person name="Haft D.H."/>
            <person name="Kolonay J.F."/>
            <person name="Smit J."/>
            <person name="Craven M.B."/>
            <person name="Khouri H.M."/>
            <person name="Shetty J."/>
            <person name="Berry K.J."/>
            <person name="Utterback T.R."/>
            <person name="Tran K."/>
            <person name="Wolf A.M."/>
            <person name="Vamathevan J.J."/>
            <person name="Ermolaeva M.D."/>
            <person name="White O."/>
            <person name="Salzberg S.L."/>
            <person name="Venter J.C."/>
            <person name="Shapiro L."/>
            <person name="Fraser C.M."/>
        </authorList>
    </citation>
    <scope>NUCLEOTIDE SEQUENCE [LARGE SCALE GENOMIC DNA]</scope>
    <source>
        <strain>ATCC 19089 / CIP 103742 / CB 15</strain>
    </source>
</reference>
<evidence type="ECO:0000255" key="1">
    <source>
        <dbReference type="HAMAP-Rule" id="MF_00528"/>
    </source>
</evidence>
<name>NTPP_CAUVC</name>
<accession>Q9AC58</accession>